<evidence type="ECO:0000250" key="1">
    <source>
        <dbReference type="UniProtKB" id="A9JX08"/>
    </source>
</evidence>
<evidence type="ECO:0000305" key="2"/>
<gene>
    <name type="primary">psmA4</name>
    <name type="ordered locus">SAB0401.1</name>
</gene>
<protein>
    <recommendedName>
        <fullName>Phenol-soluble modulin alpha 4 peptide</fullName>
    </recommendedName>
</protein>
<reference key="1">
    <citation type="journal article" date="2007" name="PLoS ONE">
        <title>Molecular correlates of host specialization in Staphylococcus aureus.</title>
        <authorList>
            <person name="Herron-Olson L."/>
            <person name="Fitzgerald J.R."/>
            <person name="Musser J.M."/>
            <person name="Kapur V."/>
        </authorList>
    </citation>
    <scope>NUCLEOTIDE SEQUENCE [LARGE SCALE GENOMIC DNA]</scope>
    <source>
        <strain>bovine RF122 / ET3-1</strain>
    </source>
</reference>
<keyword id="KW-0204">Cytolysis</keyword>
<keyword id="KW-0843">Virulence</keyword>
<name>PSMA4_STAAB</name>
<comment type="function">
    <text evidence="1">Peptide which can recruit, activate and subsequently lyse neutrophils, thus eliminating the main cellular defense against infection.</text>
</comment>
<comment type="similarity">
    <text evidence="2">Belongs to the phenol-soluble modulin alpha peptides family.</text>
</comment>
<proteinExistence type="inferred from homology"/>
<organism>
    <name type="scientific">Staphylococcus aureus (strain bovine RF122 / ET3-1)</name>
    <dbReference type="NCBI Taxonomy" id="273036"/>
    <lineage>
        <taxon>Bacteria</taxon>
        <taxon>Bacillati</taxon>
        <taxon>Bacillota</taxon>
        <taxon>Bacilli</taxon>
        <taxon>Bacillales</taxon>
        <taxon>Staphylococcaceae</taxon>
        <taxon>Staphylococcus</taxon>
    </lineage>
</organism>
<accession>P0C820</accession>
<dbReference type="EMBL" id="AJ938182">
    <property type="status" value="NOT_ANNOTATED_CDS"/>
    <property type="molecule type" value="Genomic_DNA"/>
</dbReference>
<dbReference type="SMR" id="P0C820"/>
<dbReference type="GO" id="GO:0031640">
    <property type="term" value="P:killing of cells of another organism"/>
    <property type="evidence" value="ECO:0007669"/>
    <property type="project" value="UniProtKB-KW"/>
</dbReference>
<dbReference type="InterPro" id="IPR031429">
    <property type="entry name" value="PSM_alpha"/>
</dbReference>
<dbReference type="Pfam" id="PF17063">
    <property type="entry name" value="PSMalpha"/>
    <property type="match status" value="1"/>
</dbReference>
<sequence length="20" mass="2172">MAIVGTIIKIIKAIIDIFAK</sequence>
<feature type="peptide" id="PRO_0000345076" description="Phenol-soluble modulin alpha 4 peptide">
    <location>
        <begin position="1"/>
        <end position="20"/>
    </location>
</feature>